<evidence type="ECO:0000250" key="1">
    <source>
        <dbReference type="UniProtKB" id="P27467"/>
    </source>
</evidence>
<evidence type="ECO:0000250" key="2">
    <source>
        <dbReference type="UniProtKB" id="P28026"/>
    </source>
</evidence>
<evidence type="ECO:0000250" key="3">
    <source>
        <dbReference type="UniProtKB" id="P56704"/>
    </source>
</evidence>
<evidence type="ECO:0000255" key="4"/>
<evidence type="ECO:0000305" key="5"/>
<accession>Q06443</accession>
<protein>
    <recommendedName>
        <fullName>Protein Wnt-5b</fullName>
    </recommendedName>
</protein>
<gene>
    <name type="primary">WNT-5B</name>
</gene>
<dbReference type="EMBL" id="Z14048">
    <property type="protein sequence ID" value="CAA78416.1"/>
    <property type="molecule type" value="mRNA"/>
</dbReference>
<dbReference type="PIR" id="B56549">
    <property type="entry name" value="B56549"/>
</dbReference>
<dbReference type="SMR" id="Q06443"/>
<dbReference type="GlyCosmos" id="Q06443">
    <property type="glycosylation" value="4 sites, No reported glycans"/>
</dbReference>
<dbReference type="GO" id="GO:0005615">
    <property type="term" value="C:extracellular space"/>
    <property type="evidence" value="ECO:0007669"/>
    <property type="project" value="TreeGrafter"/>
</dbReference>
<dbReference type="GO" id="GO:0005125">
    <property type="term" value="F:cytokine activity"/>
    <property type="evidence" value="ECO:0007669"/>
    <property type="project" value="TreeGrafter"/>
</dbReference>
<dbReference type="GO" id="GO:0005109">
    <property type="term" value="F:frizzled binding"/>
    <property type="evidence" value="ECO:0007669"/>
    <property type="project" value="TreeGrafter"/>
</dbReference>
<dbReference type="GO" id="GO:0005102">
    <property type="term" value="F:signaling receptor binding"/>
    <property type="evidence" value="ECO:0000250"/>
    <property type="project" value="UniProtKB"/>
</dbReference>
<dbReference type="GO" id="GO:0060070">
    <property type="term" value="P:canonical Wnt signaling pathway"/>
    <property type="evidence" value="ECO:0007669"/>
    <property type="project" value="TreeGrafter"/>
</dbReference>
<dbReference type="GO" id="GO:0045165">
    <property type="term" value="P:cell fate commitment"/>
    <property type="evidence" value="ECO:0007669"/>
    <property type="project" value="TreeGrafter"/>
</dbReference>
<dbReference type="GO" id="GO:0042692">
    <property type="term" value="P:muscle cell differentiation"/>
    <property type="evidence" value="ECO:0000250"/>
    <property type="project" value="UniProtKB"/>
</dbReference>
<dbReference type="GO" id="GO:0030182">
    <property type="term" value="P:neuron differentiation"/>
    <property type="evidence" value="ECO:0007669"/>
    <property type="project" value="TreeGrafter"/>
</dbReference>
<dbReference type="GO" id="GO:0030335">
    <property type="term" value="P:positive regulation of cell migration"/>
    <property type="evidence" value="ECO:0000250"/>
    <property type="project" value="UniProtKB"/>
</dbReference>
<dbReference type="GO" id="GO:1904105">
    <property type="term" value="P:positive regulation of convergent extension involved in gastrulation"/>
    <property type="evidence" value="ECO:0000250"/>
    <property type="project" value="UniProtKB"/>
</dbReference>
<dbReference type="GO" id="GO:2000052">
    <property type="term" value="P:positive regulation of non-canonical Wnt signaling pathway"/>
    <property type="evidence" value="ECO:0000250"/>
    <property type="project" value="UniProtKB"/>
</dbReference>
<dbReference type="CDD" id="cd19348">
    <property type="entry name" value="Wnt_Wnt5b"/>
    <property type="match status" value="1"/>
</dbReference>
<dbReference type="FunFam" id="3.30.2460.20:FF:000001">
    <property type="entry name" value="Wnt homolog"/>
    <property type="match status" value="1"/>
</dbReference>
<dbReference type="Gene3D" id="3.30.2460.20">
    <property type="match status" value="1"/>
</dbReference>
<dbReference type="InterPro" id="IPR005817">
    <property type="entry name" value="Wnt"/>
</dbReference>
<dbReference type="InterPro" id="IPR043158">
    <property type="entry name" value="Wnt_C"/>
</dbReference>
<dbReference type="InterPro" id="IPR018161">
    <property type="entry name" value="Wnt_CS"/>
</dbReference>
<dbReference type="PANTHER" id="PTHR12027:SF87">
    <property type="entry name" value="PROTEIN WNT-5B"/>
    <property type="match status" value="1"/>
</dbReference>
<dbReference type="PANTHER" id="PTHR12027">
    <property type="entry name" value="WNT RELATED"/>
    <property type="match status" value="1"/>
</dbReference>
<dbReference type="Pfam" id="PF00110">
    <property type="entry name" value="wnt"/>
    <property type="match status" value="1"/>
</dbReference>
<dbReference type="PRINTS" id="PR01349">
    <property type="entry name" value="WNTPROTEIN"/>
</dbReference>
<dbReference type="SMART" id="SM00097">
    <property type="entry name" value="WNT1"/>
    <property type="match status" value="1"/>
</dbReference>
<dbReference type="PROSITE" id="PS00246">
    <property type="entry name" value="WNT1"/>
    <property type="match status" value="1"/>
</dbReference>
<name>WNT5B_AMBME</name>
<comment type="function">
    <text>Ligand for members of the frizzled family of seven transmembrane receptors. Probable developmental protein. May be a signaling molecule which affects the development of discrete regions of tissues. Is likely to signal over only few cell diameters.</text>
</comment>
<comment type="subcellular location">
    <subcellularLocation>
        <location>Secreted</location>
        <location>Extracellular space</location>
        <location>Extracellular matrix</location>
    </subcellularLocation>
</comment>
<comment type="tissue specificity">
    <text>Predominantly in neuroectodermal tissues.</text>
</comment>
<comment type="developmental stage">
    <text>Undetectable in the blastula. Appears with gastrulation, is present throughout neurulation and organogenesis, and decrease to barely detectable levels in hatched larvae.</text>
</comment>
<comment type="PTM">
    <text evidence="1 3">Palmitoleoylation is required for efficient binding to frizzled receptors. Depalmitoleoylation leads to Wnt signaling pathway inhibition.</text>
</comment>
<comment type="similarity">
    <text evidence="5">Belongs to the Wnt family.</text>
</comment>
<sequence length="357" mass="40086">MPGIRLLLAAALLCCPPPAGATSWWSLAQNPVQRPEMYIIGAQPVCSQLSSLSPGQKKLCQLYQDHMMYIGEGAKTGIKECQYQFKQRRWNCSTVDNTSVFGRVMQIGSRETAFTYAVSAAGVVNAISRACREGELSTCGCSRTTRPKDLHRDWLWGGCGDNVDYGYRFAKEFVDAREREKNYPKGSEEQARTLMNLQNNEAGRRAVYKLADAACKCHGVSGSCSLKTCWLQLADFRKVGDHLKEKYDSAAAMRINRKGKLELVNNRFNLPTVEDLVYTDQSPDYCLRNESTGSLGTLGRLCNKTSEGMDGCELMCCGRGYDQFKTVQVERCHCKFHWCCFVKCKKCTEIVDQYVCK</sequence>
<feature type="signal peptide" evidence="4">
    <location>
        <begin position="1"/>
        <end position="18"/>
    </location>
</feature>
<feature type="chain" id="PRO_0000041433" description="Protein Wnt-5b">
    <location>
        <begin position="19"/>
        <end position="357"/>
    </location>
</feature>
<feature type="lipid moiety-binding region" description="O-palmitoleoyl serine; by PORCN" evidence="3">
    <location>
        <position position="221"/>
    </location>
</feature>
<feature type="glycosylation site" description="N-linked (GlcNAc...) asparagine" evidence="4">
    <location>
        <position position="91"/>
    </location>
</feature>
<feature type="glycosylation site" description="N-linked (GlcNAc...) asparagine" evidence="4">
    <location>
        <position position="97"/>
    </location>
</feature>
<feature type="glycosylation site" description="N-linked (GlcNAc...) asparagine" evidence="4">
    <location>
        <position position="289"/>
    </location>
</feature>
<feature type="glycosylation site" description="N-linked (GlcNAc...) asparagine" evidence="4">
    <location>
        <position position="303"/>
    </location>
</feature>
<feature type="disulfide bond" evidence="2">
    <location>
        <begin position="81"/>
        <end position="92"/>
    </location>
</feature>
<feature type="disulfide bond" evidence="2">
    <location>
        <begin position="131"/>
        <end position="139"/>
    </location>
</feature>
<feature type="disulfide bond" evidence="2">
    <location>
        <begin position="141"/>
        <end position="159"/>
    </location>
</feature>
<feature type="disulfide bond" evidence="2">
    <location>
        <begin position="215"/>
        <end position="229"/>
    </location>
</feature>
<feature type="disulfide bond" evidence="2">
    <location>
        <begin position="217"/>
        <end position="224"/>
    </location>
</feature>
<feature type="disulfide bond" evidence="2">
    <location>
        <begin position="286"/>
        <end position="317"/>
    </location>
</feature>
<feature type="disulfide bond" evidence="2">
    <location>
        <begin position="302"/>
        <end position="312"/>
    </location>
</feature>
<feature type="disulfide bond" evidence="2">
    <location>
        <begin position="316"/>
        <end position="356"/>
    </location>
</feature>
<feature type="disulfide bond" evidence="2">
    <location>
        <begin position="332"/>
        <end position="347"/>
    </location>
</feature>
<feature type="disulfide bond" evidence="2">
    <location>
        <begin position="334"/>
        <end position="344"/>
    </location>
</feature>
<feature type="disulfide bond" evidence="2">
    <location>
        <begin position="339"/>
        <end position="340"/>
    </location>
</feature>
<proteinExistence type="evidence at transcript level"/>
<reference key="1">
    <citation type="journal article" date="1993" name="Mech. Dev.">
        <title>Isolation of cDNAs for two closely related members of the axolotl Wnt family, Awnt-5A and Awnt-5B, and analysis of their expression during development.</title>
        <authorList>
            <person name="Busse U."/>
            <person name="Seguin C."/>
        </authorList>
    </citation>
    <scope>NUCLEOTIDE SEQUENCE [MRNA]</scope>
</reference>
<organism>
    <name type="scientific">Ambystoma mexicanum</name>
    <name type="common">Axolotl</name>
    <dbReference type="NCBI Taxonomy" id="8296"/>
    <lineage>
        <taxon>Eukaryota</taxon>
        <taxon>Metazoa</taxon>
        <taxon>Chordata</taxon>
        <taxon>Craniata</taxon>
        <taxon>Vertebrata</taxon>
        <taxon>Euteleostomi</taxon>
        <taxon>Amphibia</taxon>
        <taxon>Batrachia</taxon>
        <taxon>Caudata</taxon>
        <taxon>Salamandroidea</taxon>
        <taxon>Ambystomatidae</taxon>
        <taxon>Ambystoma</taxon>
    </lineage>
</organism>
<keyword id="KW-0217">Developmental protein</keyword>
<keyword id="KW-1015">Disulfide bond</keyword>
<keyword id="KW-0272">Extracellular matrix</keyword>
<keyword id="KW-0325">Glycoprotein</keyword>
<keyword id="KW-0449">Lipoprotein</keyword>
<keyword id="KW-0964">Secreted</keyword>
<keyword id="KW-0732">Signal</keyword>
<keyword id="KW-0879">Wnt signaling pathway</keyword>